<proteinExistence type="inferred from homology"/>
<evidence type="ECO:0000255" key="1">
    <source>
        <dbReference type="HAMAP-Rule" id="MF_00381"/>
    </source>
</evidence>
<organism>
    <name type="scientific">Pseudomonas syringae pv. tomato (strain ATCC BAA-871 / DC3000)</name>
    <dbReference type="NCBI Taxonomy" id="223283"/>
    <lineage>
        <taxon>Bacteria</taxon>
        <taxon>Pseudomonadati</taxon>
        <taxon>Pseudomonadota</taxon>
        <taxon>Gammaproteobacteria</taxon>
        <taxon>Pseudomonadales</taxon>
        <taxon>Pseudomonadaceae</taxon>
        <taxon>Pseudomonas</taxon>
    </lineage>
</organism>
<protein>
    <recommendedName>
        <fullName evidence="1">Integration host factor subunit beta</fullName>
        <shortName evidence="1">IHF-beta</shortName>
    </recommendedName>
</protein>
<accession>Q885T0</accession>
<sequence>MTKSELIERIVTHQGLLSSKDVELAIKTMLEQMSQCLATGDRIEIRGFGSFSLHYRAPRVGRNPKTGQSVSLDGKFVPHFKPGKELRDRVNEDEEEGF</sequence>
<comment type="function">
    <text evidence="1">This protein is one of the two subunits of integration host factor, a specific DNA-binding protein that functions in genetic recombination as well as in transcriptional and translational control.</text>
</comment>
<comment type="subunit">
    <text evidence="1">Heterodimer of an alpha and a beta chain.</text>
</comment>
<comment type="similarity">
    <text evidence="1">Belongs to the bacterial histone-like protein family.</text>
</comment>
<keyword id="KW-0233">DNA recombination</keyword>
<keyword id="KW-0238">DNA-binding</keyword>
<keyword id="KW-1185">Reference proteome</keyword>
<keyword id="KW-0804">Transcription</keyword>
<keyword id="KW-0805">Transcription regulation</keyword>
<keyword id="KW-0810">Translation regulation</keyword>
<dbReference type="EMBL" id="AE016853">
    <property type="protein sequence ID" value="AAO55271.1"/>
    <property type="molecule type" value="Genomic_DNA"/>
</dbReference>
<dbReference type="RefSeq" id="NP_791576.1">
    <property type="nucleotide sequence ID" value="NC_004578.1"/>
</dbReference>
<dbReference type="RefSeq" id="WP_002554561.1">
    <property type="nucleotide sequence ID" value="NC_004578.1"/>
</dbReference>
<dbReference type="SMR" id="Q885T0"/>
<dbReference type="STRING" id="223283.PSPTO_1751"/>
<dbReference type="GeneID" id="77279485"/>
<dbReference type="KEGG" id="pst:PSPTO_1751"/>
<dbReference type="PATRIC" id="fig|223283.9.peg.1780"/>
<dbReference type="eggNOG" id="COG0776">
    <property type="taxonomic scope" value="Bacteria"/>
</dbReference>
<dbReference type="HOGENOM" id="CLU_105066_2_0_6"/>
<dbReference type="OrthoDB" id="9804203at2"/>
<dbReference type="PhylomeDB" id="Q885T0"/>
<dbReference type="Proteomes" id="UP000002515">
    <property type="component" value="Chromosome"/>
</dbReference>
<dbReference type="GO" id="GO:0005694">
    <property type="term" value="C:chromosome"/>
    <property type="evidence" value="ECO:0007669"/>
    <property type="project" value="InterPro"/>
</dbReference>
<dbReference type="GO" id="GO:0005829">
    <property type="term" value="C:cytosol"/>
    <property type="evidence" value="ECO:0007669"/>
    <property type="project" value="TreeGrafter"/>
</dbReference>
<dbReference type="GO" id="GO:0003677">
    <property type="term" value="F:DNA binding"/>
    <property type="evidence" value="ECO:0007669"/>
    <property type="project" value="UniProtKB-UniRule"/>
</dbReference>
<dbReference type="GO" id="GO:0030527">
    <property type="term" value="F:structural constituent of chromatin"/>
    <property type="evidence" value="ECO:0007669"/>
    <property type="project" value="InterPro"/>
</dbReference>
<dbReference type="GO" id="GO:0006310">
    <property type="term" value="P:DNA recombination"/>
    <property type="evidence" value="ECO:0007669"/>
    <property type="project" value="UniProtKB-UniRule"/>
</dbReference>
<dbReference type="GO" id="GO:0006355">
    <property type="term" value="P:regulation of DNA-templated transcription"/>
    <property type="evidence" value="ECO:0007669"/>
    <property type="project" value="UniProtKB-UniRule"/>
</dbReference>
<dbReference type="GO" id="GO:0006417">
    <property type="term" value="P:regulation of translation"/>
    <property type="evidence" value="ECO:0007669"/>
    <property type="project" value="UniProtKB-UniRule"/>
</dbReference>
<dbReference type="CDD" id="cd13836">
    <property type="entry name" value="IHF_B"/>
    <property type="match status" value="1"/>
</dbReference>
<dbReference type="FunFam" id="4.10.520.10:FF:000003">
    <property type="entry name" value="Integration host factor subunit beta"/>
    <property type="match status" value="1"/>
</dbReference>
<dbReference type="Gene3D" id="4.10.520.10">
    <property type="entry name" value="IHF-like DNA-binding proteins"/>
    <property type="match status" value="1"/>
</dbReference>
<dbReference type="HAMAP" id="MF_00381">
    <property type="entry name" value="IHF_beta"/>
    <property type="match status" value="1"/>
</dbReference>
<dbReference type="InterPro" id="IPR000119">
    <property type="entry name" value="Hist_DNA-bd"/>
</dbReference>
<dbReference type="InterPro" id="IPR020816">
    <property type="entry name" value="Histone-like_DNA-bd_CS"/>
</dbReference>
<dbReference type="InterPro" id="IPR010992">
    <property type="entry name" value="IHF-like_DNA-bd_dom_sf"/>
</dbReference>
<dbReference type="InterPro" id="IPR005685">
    <property type="entry name" value="IHF_beta"/>
</dbReference>
<dbReference type="NCBIfam" id="TIGR00988">
    <property type="entry name" value="hip"/>
    <property type="match status" value="1"/>
</dbReference>
<dbReference type="NCBIfam" id="NF001222">
    <property type="entry name" value="PRK00199.1"/>
    <property type="match status" value="1"/>
</dbReference>
<dbReference type="PANTHER" id="PTHR33175">
    <property type="entry name" value="DNA-BINDING PROTEIN HU"/>
    <property type="match status" value="1"/>
</dbReference>
<dbReference type="PANTHER" id="PTHR33175:SF5">
    <property type="entry name" value="INTEGRATION HOST FACTOR SUBUNIT BETA"/>
    <property type="match status" value="1"/>
</dbReference>
<dbReference type="Pfam" id="PF00216">
    <property type="entry name" value="Bac_DNA_binding"/>
    <property type="match status" value="1"/>
</dbReference>
<dbReference type="PRINTS" id="PR01727">
    <property type="entry name" value="DNABINDINGHU"/>
</dbReference>
<dbReference type="SMART" id="SM00411">
    <property type="entry name" value="BHL"/>
    <property type="match status" value="1"/>
</dbReference>
<dbReference type="SUPFAM" id="SSF47729">
    <property type="entry name" value="IHF-like DNA-binding proteins"/>
    <property type="match status" value="1"/>
</dbReference>
<dbReference type="PROSITE" id="PS00045">
    <property type="entry name" value="HISTONE_LIKE"/>
    <property type="match status" value="1"/>
</dbReference>
<name>IHFB_PSESM</name>
<reference key="1">
    <citation type="journal article" date="2003" name="Proc. Natl. Acad. Sci. U.S.A.">
        <title>The complete genome sequence of the Arabidopsis and tomato pathogen Pseudomonas syringae pv. tomato DC3000.</title>
        <authorList>
            <person name="Buell C.R."/>
            <person name="Joardar V."/>
            <person name="Lindeberg M."/>
            <person name="Selengut J."/>
            <person name="Paulsen I.T."/>
            <person name="Gwinn M.L."/>
            <person name="Dodson R.J."/>
            <person name="DeBoy R.T."/>
            <person name="Durkin A.S."/>
            <person name="Kolonay J.F."/>
            <person name="Madupu R."/>
            <person name="Daugherty S.C."/>
            <person name="Brinkac L.M."/>
            <person name="Beanan M.J."/>
            <person name="Haft D.H."/>
            <person name="Nelson W.C."/>
            <person name="Davidsen T.M."/>
            <person name="Zafar N."/>
            <person name="Zhou L."/>
            <person name="Liu J."/>
            <person name="Yuan Q."/>
            <person name="Khouri H.M."/>
            <person name="Fedorova N.B."/>
            <person name="Tran B."/>
            <person name="Russell D."/>
            <person name="Berry K.J."/>
            <person name="Utterback T.R."/>
            <person name="Van Aken S.E."/>
            <person name="Feldblyum T.V."/>
            <person name="D'Ascenzo M."/>
            <person name="Deng W.-L."/>
            <person name="Ramos A.R."/>
            <person name="Alfano J.R."/>
            <person name="Cartinhour S."/>
            <person name="Chatterjee A.K."/>
            <person name="Delaney T.P."/>
            <person name="Lazarowitz S.G."/>
            <person name="Martin G.B."/>
            <person name="Schneider D.J."/>
            <person name="Tang X."/>
            <person name="Bender C.L."/>
            <person name="White O."/>
            <person name="Fraser C.M."/>
            <person name="Collmer A."/>
        </authorList>
    </citation>
    <scope>NUCLEOTIDE SEQUENCE [LARGE SCALE GENOMIC DNA]</scope>
    <source>
        <strain>ATCC BAA-871 / DC3000</strain>
    </source>
</reference>
<gene>
    <name evidence="1" type="primary">ihfB</name>
    <name evidence="1" type="synonym">himD</name>
    <name type="ordered locus">PSPTO_1751</name>
</gene>
<feature type="chain" id="PRO_0000105062" description="Integration host factor subunit beta">
    <location>
        <begin position="1"/>
        <end position="98"/>
    </location>
</feature>